<gene>
    <name evidence="1" type="primary">rpsO</name>
    <name type="ordered locus">Emin_1168</name>
</gene>
<sequence>MVLSVNDRKEIMGKFQASAADTGSPAVQVALITERIKYLSGHLKANPKDFAGERGLTKLVGQRKRLLSYLKKKDFAKYTQVTKELNLRK</sequence>
<protein>
    <recommendedName>
        <fullName evidence="1">Small ribosomal subunit protein uS15</fullName>
    </recommendedName>
    <alternativeName>
        <fullName evidence="2">30S ribosomal protein S15</fullName>
    </alternativeName>
</protein>
<dbReference type="EMBL" id="CP001055">
    <property type="protein sequence ID" value="ACC98719.1"/>
    <property type="molecule type" value="Genomic_DNA"/>
</dbReference>
<dbReference type="RefSeq" id="WP_012415334.1">
    <property type="nucleotide sequence ID" value="NC_010644.1"/>
</dbReference>
<dbReference type="SMR" id="B2KDX3"/>
<dbReference type="STRING" id="445932.Emin_1168"/>
<dbReference type="KEGG" id="emi:Emin_1168"/>
<dbReference type="HOGENOM" id="CLU_148518_0_0_0"/>
<dbReference type="OrthoDB" id="9799262at2"/>
<dbReference type="Proteomes" id="UP000001029">
    <property type="component" value="Chromosome"/>
</dbReference>
<dbReference type="GO" id="GO:0022627">
    <property type="term" value="C:cytosolic small ribosomal subunit"/>
    <property type="evidence" value="ECO:0007669"/>
    <property type="project" value="TreeGrafter"/>
</dbReference>
<dbReference type="GO" id="GO:0019843">
    <property type="term" value="F:rRNA binding"/>
    <property type="evidence" value="ECO:0007669"/>
    <property type="project" value="UniProtKB-UniRule"/>
</dbReference>
<dbReference type="GO" id="GO:0003735">
    <property type="term" value="F:structural constituent of ribosome"/>
    <property type="evidence" value="ECO:0007669"/>
    <property type="project" value="InterPro"/>
</dbReference>
<dbReference type="GO" id="GO:0006412">
    <property type="term" value="P:translation"/>
    <property type="evidence" value="ECO:0007669"/>
    <property type="project" value="UniProtKB-UniRule"/>
</dbReference>
<dbReference type="CDD" id="cd00353">
    <property type="entry name" value="Ribosomal_S15p_S13e"/>
    <property type="match status" value="1"/>
</dbReference>
<dbReference type="FunFam" id="1.10.287.10:FF:000002">
    <property type="entry name" value="30S ribosomal protein S15"/>
    <property type="match status" value="1"/>
</dbReference>
<dbReference type="Gene3D" id="6.10.250.3130">
    <property type="match status" value="1"/>
</dbReference>
<dbReference type="Gene3D" id="1.10.287.10">
    <property type="entry name" value="S15/NS1, RNA-binding"/>
    <property type="match status" value="1"/>
</dbReference>
<dbReference type="HAMAP" id="MF_01343_B">
    <property type="entry name" value="Ribosomal_uS15_B"/>
    <property type="match status" value="1"/>
</dbReference>
<dbReference type="InterPro" id="IPR000589">
    <property type="entry name" value="Ribosomal_uS15"/>
</dbReference>
<dbReference type="InterPro" id="IPR005290">
    <property type="entry name" value="Ribosomal_uS15_bac-type"/>
</dbReference>
<dbReference type="InterPro" id="IPR009068">
    <property type="entry name" value="uS15_NS1_RNA-bd_sf"/>
</dbReference>
<dbReference type="NCBIfam" id="TIGR00952">
    <property type="entry name" value="S15_bact"/>
    <property type="match status" value="1"/>
</dbReference>
<dbReference type="PANTHER" id="PTHR23321">
    <property type="entry name" value="RIBOSOMAL PROTEIN S15, BACTERIAL AND ORGANELLAR"/>
    <property type="match status" value="1"/>
</dbReference>
<dbReference type="PANTHER" id="PTHR23321:SF26">
    <property type="entry name" value="SMALL RIBOSOMAL SUBUNIT PROTEIN US15M"/>
    <property type="match status" value="1"/>
</dbReference>
<dbReference type="Pfam" id="PF00312">
    <property type="entry name" value="Ribosomal_S15"/>
    <property type="match status" value="1"/>
</dbReference>
<dbReference type="SMART" id="SM01387">
    <property type="entry name" value="Ribosomal_S15"/>
    <property type="match status" value="1"/>
</dbReference>
<dbReference type="SUPFAM" id="SSF47060">
    <property type="entry name" value="S15/NS1 RNA-binding domain"/>
    <property type="match status" value="1"/>
</dbReference>
<dbReference type="PROSITE" id="PS00362">
    <property type="entry name" value="RIBOSOMAL_S15"/>
    <property type="match status" value="1"/>
</dbReference>
<accession>B2KDX3</accession>
<feature type="chain" id="PRO_0000354198" description="Small ribosomal subunit protein uS15">
    <location>
        <begin position="1"/>
        <end position="89"/>
    </location>
</feature>
<name>RS15_ELUMP</name>
<comment type="function">
    <text evidence="1">One of the primary rRNA binding proteins, it binds directly to 16S rRNA where it helps nucleate assembly of the platform of the 30S subunit by binding and bridging several RNA helices of the 16S rRNA.</text>
</comment>
<comment type="function">
    <text evidence="1">Forms an intersubunit bridge (bridge B4) with the 23S rRNA of the 50S subunit in the ribosome.</text>
</comment>
<comment type="subunit">
    <text evidence="1">Part of the 30S ribosomal subunit. Forms a bridge to the 50S subunit in the 70S ribosome, contacting the 23S rRNA.</text>
</comment>
<comment type="similarity">
    <text evidence="1">Belongs to the universal ribosomal protein uS15 family.</text>
</comment>
<proteinExistence type="inferred from homology"/>
<organism>
    <name type="scientific">Elusimicrobium minutum (strain Pei191)</name>
    <dbReference type="NCBI Taxonomy" id="445932"/>
    <lineage>
        <taxon>Bacteria</taxon>
        <taxon>Pseudomonadati</taxon>
        <taxon>Elusimicrobiota</taxon>
        <taxon>Elusimicrobia</taxon>
        <taxon>Elusimicrobiales</taxon>
        <taxon>Elusimicrobiaceae</taxon>
        <taxon>Elusimicrobium</taxon>
    </lineage>
</organism>
<keyword id="KW-1185">Reference proteome</keyword>
<keyword id="KW-0687">Ribonucleoprotein</keyword>
<keyword id="KW-0689">Ribosomal protein</keyword>
<keyword id="KW-0694">RNA-binding</keyword>
<keyword id="KW-0699">rRNA-binding</keyword>
<evidence type="ECO:0000255" key="1">
    <source>
        <dbReference type="HAMAP-Rule" id="MF_01343"/>
    </source>
</evidence>
<evidence type="ECO:0000305" key="2"/>
<reference key="1">
    <citation type="journal article" date="2009" name="Appl. Environ. Microbiol.">
        <title>Genomic analysis of 'Elusimicrobium minutum,' the first cultivated representative of the phylum 'Elusimicrobia' (formerly termite group 1).</title>
        <authorList>
            <person name="Herlemann D.P.R."/>
            <person name="Geissinger O."/>
            <person name="Ikeda-Ohtsubo W."/>
            <person name="Kunin V."/>
            <person name="Sun H."/>
            <person name="Lapidus A."/>
            <person name="Hugenholtz P."/>
            <person name="Brune A."/>
        </authorList>
    </citation>
    <scope>NUCLEOTIDE SEQUENCE [LARGE SCALE GENOMIC DNA]</scope>
    <source>
        <strain>Pei191</strain>
    </source>
</reference>